<reference key="1">
    <citation type="journal article" date="2008" name="J. Bacteriol.">
        <title>Complete genome sequence of Neisseria gonorrhoeae NCCP11945.</title>
        <authorList>
            <person name="Chung G.T."/>
            <person name="Yoo J.S."/>
            <person name="Oh H.B."/>
            <person name="Lee Y.S."/>
            <person name="Cha S.H."/>
            <person name="Kim S.J."/>
            <person name="Yoo C.K."/>
        </authorList>
    </citation>
    <scope>NUCLEOTIDE SEQUENCE [LARGE SCALE GENOMIC DNA]</scope>
    <source>
        <strain>NCCP11945</strain>
    </source>
</reference>
<evidence type="ECO:0000255" key="1">
    <source>
        <dbReference type="HAMAP-Rule" id="MF_00149"/>
    </source>
</evidence>
<evidence type="ECO:0000256" key="2">
    <source>
        <dbReference type="SAM" id="MobiDB-lite"/>
    </source>
</evidence>
<accession>B4RLX4</accession>
<name>MUTL_NEIG2</name>
<organism>
    <name type="scientific">Neisseria gonorrhoeae (strain NCCP11945)</name>
    <dbReference type="NCBI Taxonomy" id="521006"/>
    <lineage>
        <taxon>Bacteria</taxon>
        <taxon>Pseudomonadati</taxon>
        <taxon>Pseudomonadota</taxon>
        <taxon>Betaproteobacteria</taxon>
        <taxon>Neisseriales</taxon>
        <taxon>Neisseriaceae</taxon>
        <taxon>Neisseria</taxon>
    </lineage>
</organism>
<feature type="chain" id="PRO_1000096666" description="DNA mismatch repair protein MutL">
    <location>
        <begin position="1"/>
        <end position="658"/>
    </location>
</feature>
<feature type="region of interest" description="Disordered" evidence="2">
    <location>
        <begin position="114"/>
        <end position="138"/>
    </location>
</feature>
<feature type="region of interest" description="Disordered" evidence="2">
    <location>
        <begin position="353"/>
        <end position="405"/>
    </location>
</feature>
<feature type="compositionally biased region" description="Basic and acidic residues" evidence="2">
    <location>
        <begin position="114"/>
        <end position="130"/>
    </location>
</feature>
<feature type="compositionally biased region" description="Polar residues" evidence="2">
    <location>
        <begin position="361"/>
        <end position="372"/>
    </location>
</feature>
<proteinExistence type="inferred from homology"/>
<protein>
    <recommendedName>
        <fullName evidence="1">DNA mismatch repair protein MutL</fullName>
    </recommendedName>
</protein>
<gene>
    <name evidence="1" type="primary">mutL</name>
    <name type="ordered locus">NGK_1134</name>
</gene>
<comment type="function">
    <text evidence="1">This protein is involved in the repair of mismatches in DNA. It is required for dam-dependent methyl-directed DNA mismatch repair. May act as a 'molecular matchmaker', a protein that promotes the formation of a stable complex between two or more DNA-binding proteins in an ATP-dependent manner without itself being part of a final effector complex.</text>
</comment>
<comment type="similarity">
    <text evidence="1">Belongs to the DNA mismatch repair MutL/HexB family.</text>
</comment>
<keyword id="KW-0227">DNA damage</keyword>
<keyword id="KW-0234">DNA repair</keyword>
<dbReference type="EMBL" id="CP001050">
    <property type="protein sequence ID" value="ACF29811.1"/>
    <property type="molecule type" value="Genomic_DNA"/>
</dbReference>
<dbReference type="RefSeq" id="WP_003688688.1">
    <property type="nucleotide sequence ID" value="NC_011035.1"/>
</dbReference>
<dbReference type="SMR" id="B4RLX4"/>
<dbReference type="GeneID" id="66753088"/>
<dbReference type="KEGG" id="ngk:NGK_1134"/>
<dbReference type="HOGENOM" id="CLU_004131_4_2_4"/>
<dbReference type="Proteomes" id="UP000002564">
    <property type="component" value="Chromosome"/>
</dbReference>
<dbReference type="GO" id="GO:0032300">
    <property type="term" value="C:mismatch repair complex"/>
    <property type="evidence" value="ECO:0007669"/>
    <property type="project" value="InterPro"/>
</dbReference>
<dbReference type="GO" id="GO:0005524">
    <property type="term" value="F:ATP binding"/>
    <property type="evidence" value="ECO:0007669"/>
    <property type="project" value="InterPro"/>
</dbReference>
<dbReference type="GO" id="GO:0016887">
    <property type="term" value="F:ATP hydrolysis activity"/>
    <property type="evidence" value="ECO:0007669"/>
    <property type="project" value="InterPro"/>
</dbReference>
<dbReference type="GO" id="GO:0140664">
    <property type="term" value="F:ATP-dependent DNA damage sensor activity"/>
    <property type="evidence" value="ECO:0007669"/>
    <property type="project" value="InterPro"/>
</dbReference>
<dbReference type="GO" id="GO:0030983">
    <property type="term" value="F:mismatched DNA binding"/>
    <property type="evidence" value="ECO:0007669"/>
    <property type="project" value="InterPro"/>
</dbReference>
<dbReference type="GO" id="GO:0006298">
    <property type="term" value="P:mismatch repair"/>
    <property type="evidence" value="ECO:0007669"/>
    <property type="project" value="UniProtKB-UniRule"/>
</dbReference>
<dbReference type="CDD" id="cd16926">
    <property type="entry name" value="HATPase_MutL-MLH-PMS-like"/>
    <property type="match status" value="1"/>
</dbReference>
<dbReference type="CDD" id="cd03482">
    <property type="entry name" value="MutL_Trans_MutL"/>
    <property type="match status" value="1"/>
</dbReference>
<dbReference type="FunFam" id="3.30.230.10:FF:000013">
    <property type="entry name" value="DNA mismatch repair endonuclease MutL"/>
    <property type="match status" value="1"/>
</dbReference>
<dbReference type="FunFam" id="3.30.565.10:FF:000003">
    <property type="entry name" value="DNA mismatch repair endonuclease MutL"/>
    <property type="match status" value="1"/>
</dbReference>
<dbReference type="Gene3D" id="3.30.230.10">
    <property type="match status" value="1"/>
</dbReference>
<dbReference type="Gene3D" id="3.30.565.10">
    <property type="entry name" value="Histidine kinase-like ATPase, C-terminal domain"/>
    <property type="match status" value="1"/>
</dbReference>
<dbReference type="Gene3D" id="3.30.1540.20">
    <property type="entry name" value="MutL, C-terminal domain, dimerisation subdomain"/>
    <property type="match status" value="1"/>
</dbReference>
<dbReference type="Gene3D" id="3.30.1370.100">
    <property type="entry name" value="MutL, C-terminal domain, regulatory subdomain"/>
    <property type="match status" value="1"/>
</dbReference>
<dbReference type="HAMAP" id="MF_00149">
    <property type="entry name" value="DNA_mis_repair"/>
    <property type="match status" value="1"/>
</dbReference>
<dbReference type="InterPro" id="IPR014762">
    <property type="entry name" value="DNA_mismatch_repair_CS"/>
</dbReference>
<dbReference type="InterPro" id="IPR020667">
    <property type="entry name" value="DNA_mismatch_repair_MutL"/>
</dbReference>
<dbReference type="InterPro" id="IPR013507">
    <property type="entry name" value="DNA_mismatch_S5_2-like"/>
</dbReference>
<dbReference type="InterPro" id="IPR036890">
    <property type="entry name" value="HATPase_C_sf"/>
</dbReference>
<dbReference type="InterPro" id="IPR002099">
    <property type="entry name" value="MutL/Mlh/PMS"/>
</dbReference>
<dbReference type="InterPro" id="IPR038973">
    <property type="entry name" value="MutL/Mlh/Pms-like"/>
</dbReference>
<dbReference type="InterPro" id="IPR014790">
    <property type="entry name" value="MutL_C"/>
</dbReference>
<dbReference type="InterPro" id="IPR042120">
    <property type="entry name" value="MutL_C_dimsub"/>
</dbReference>
<dbReference type="InterPro" id="IPR042121">
    <property type="entry name" value="MutL_C_regsub"/>
</dbReference>
<dbReference type="InterPro" id="IPR037198">
    <property type="entry name" value="MutL_C_sf"/>
</dbReference>
<dbReference type="InterPro" id="IPR020568">
    <property type="entry name" value="Ribosomal_Su5_D2-typ_SF"/>
</dbReference>
<dbReference type="InterPro" id="IPR014721">
    <property type="entry name" value="Ribsml_uS5_D2-typ_fold_subgr"/>
</dbReference>
<dbReference type="NCBIfam" id="TIGR00585">
    <property type="entry name" value="mutl"/>
    <property type="match status" value="1"/>
</dbReference>
<dbReference type="NCBIfam" id="NF000949">
    <property type="entry name" value="PRK00095.1-2"/>
    <property type="match status" value="1"/>
</dbReference>
<dbReference type="PANTHER" id="PTHR10073">
    <property type="entry name" value="DNA MISMATCH REPAIR PROTEIN MLH, PMS, MUTL"/>
    <property type="match status" value="1"/>
</dbReference>
<dbReference type="PANTHER" id="PTHR10073:SF12">
    <property type="entry name" value="DNA MISMATCH REPAIR PROTEIN MLH1"/>
    <property type="match status" value="1"/>
</dbReference>
<dbReference type="Pfam" id="PF01119">
    <property type="entry name" value="DNA_mis_repair"/>
    <property type="match status" value="1"/>
</dbReference>
<dbReference type="Pfam" id="PF13589">
    <property type="entry name" value="HATPase_c_3"/>
    <property type="match status" value="1"/>
</dbReference>
<dbReference type="Pfam" id="PF08676">
    <property type="entry name" value="MutL_C"/>
    <property type="match status" value="1"/>
</dbReference>
<dbReference type="SMART" id="SM01340">
    <property type="entry name" value="DNA_mis_repair"/>
    <property type="match status" value="1"/>
</dbReference>
<dbReference type="SMART" id="SM00853">
    <property type="entry name" value="MutL_C"/>
    <property type="match status" value="1"/>
</dbReference>
<dbReference type="SUPFAM" id="SSF55874">
    <property type="entry name" value="ATPase domain of HSP90 chaperone/DNA topoisomerase II/histidine kinase"/>
    <property type="match status" value="1"/>
</dbReference>
<dbReference type="SUPFAM" id="SSF118116">
    <property type="entry name" value="DNA mismatch repair protein MutL"/>
    <property type="match status" value="1"/>
</dbReference>
<dbReference type="SUPFAM" id="SSF54211">
    <property type="entry name" value="Ribosomal protein S5 domain 2-like"/>
    <property type="match status" value="1"/>
</dbReference>
<dbReference type="PROSITE" id="PS00058">
    <property type="entry name" value="DNA_MISMATCH_REPAIR_1"/>
    <property type="match status" value="1"/>
</dbReference>
<sequence>MPRIAALPDHLVNQIAAGEVVERPANALKEIVENSIDAGATAVDVELEGGGIRLIRVGDNGGGIHPDDIELALHRHATSKIKTLNDLEHVASMGFRGEGLASIASVSRLTLTSRQEDSSHATQVKAEDGKLSSPTAAAHPVGTTIEAAELFFNTPARRKFLKSENTEYAHCATMLERLALAHPHIAFSLKRDGKQVFKLPAQSLHERIAAIVGDDFQTASLEIDSGNSALRLYGAIAKPTFAKGKTDKQYCFVNHRFVRDKVMLHAVKQAYRDVLHNALTPAFVLFLELPPKAVDVNVHPTKTEIRFRDSRQVHQLVFHTLNKALADTRANLTESVSNAGEVLHDITGVTPAPMPSENDSENLFDSASNHPTGNKPDTRNAFGSSGKTAPMPYQAARAPQQHSLSLRESRAAMDTYAELYKKTDDIDLELSQFEQARFGNMPSETPAHKTDTPLSDGIPSQSELPPLGFAIAQLLGIYILAQAEDSLLLIDMHAAAERVNYEKMKRQRQENGNLQSQHLLIPVTFAASHEECAALADHAETLAGFGLELSDMGGNTLAVRAAPVMLGKSDVVSLARDVLGELAQVGSSQTIASHENRILATMSCHGSIRAGRRLTLPEMNALLRDMENTPRSNQCNHGRPTWVKLTLKELDTLFLRGQ</sequence>